<organism>
    <name type="scientific">Acinetobacter baumannii (strain AB307-0294)</name>
    <dbReference type="NCBI Taxonomy" id="557600"/>
    <lineage>
        <taxon>Bacteria</taxon>
        <taxon>Pseudomonadati</taxon>
        <taxon>Pseudomonadota</taxon>
        <taxon>Gammaproteobacteria</taxon>
        <taxon>Moraxellales</taxon>
        <taxon>Moraxellaceae</taxon>
        <taxon>Acinetobacter</taxon>
        <taxon>Acinetobacter calcoaceticus/baumannii complex</taxon>
    </lineage>
</organism>
<protein>
    <recommendedName>
        <fullName evidence="1">Ribosomal protein L11 methyltransferase</fullName>
        <shortName evidence="1">L11 Mtase</shortName>
        <ecNumber evidence="1">2.1.1.-</ecNumber>
    </recommendedName>
</protein>
<keyword id="KW-0963">Cytoplasm</keyword>
<keyword id="KW-0489">Methyltransferase</keyword>
<keyword id="KW-0949">S-adenosyl-L-methionine</keyword>
<keyword id="KW-0808">Transferase</keyword>
<proteinExistence type="inferred from homology"/>
<accession>B7H0I7</accession>
<dbReference type="EC" id="2.1.1.-" evidence="1"/>
<dbReference type="EMBL" id="CP001172">
    <property type="protein sequence ID" value="ACJ56080.1"/>
    <property type="molecule type" value="Genomic_DNA"/>
</dbReference>
<dbReference type="RefSeq" id="WP_000871703.1">
    <property type="nucleotide sequence ID" value="NZ_CP001172.1"/>
</dbReference>
<dbReference type="SMR" id="B7H0I7"/>
<dbReference type="GeneID" id="92894424"/>
<dbReference type="HOGENOM" id="CLU_049382_4_1_6"/>
<dbReference type="Proteomes" id="UP000006924">
    <property type="component" value="Chromosome"/>
</dbReference>
<dbReference type="GO" id="GO:0005829">
    <property type="term" value="C:cytosol"/>
    <property type="evidence" value="ECO:0007669"/>
    <property type="project" value="TreeGrafter"/>
</dbReference>
<dbReference type="GO" id="GO:0016279">
    <property type="term" value="F:protein-lysine N-methyltransferase activity"/>
    <property type="evidence" value="ECO:0007669"/>
    <property type="project" value="TreeGrafter"/>
</dbReference>
<dbReference type="GO" id="GO:0032259">
    <property type="term" value="P:methylation"/>
    <property type="evidence" value="ECO:0007669"/>
    <property type="project" value="UniProtKB-KW"/>
</dbReference>
<dbReference type="CDD" id="cd02440">
    <property type="entry name" value="AdoMet_MTases"/>
    <property type="match status" value="1"/>
</dbReference>
<dbReference type="Gene3D" id="3.40.50.150">
    <property type="entry name" value="Vaccinia Virus protein VP39"/>
    <property type="match status" value="1"/>
</dbReference>
<dbReference type="HAMAP" id="MF_00735">
    <property type="entry name" value="Methyltr_PrmA"/>
    <property type="match status" value="1"/>
</dbReference>
<dbReference type="InterPro" id="IPR050078">
    <property type="entry name" value="Ribosomal_L11_MeTrfase_PrmA"/>
</dbReference>
<dbReference type="InterPro" id="IPR004498">
    <property type="entry name" value="Ribosomal_PrmA_MeTrfase"/>
</dbReference>
<dbReference type="InterPro" id="IPR029063">
    <property type="entry name" value="SAM-dependent_MTases_sf"/>
</dbReference>
<dbReference type="NCBIfam" id="TIGR00406">
    <property type="entry name" value="prmA"/>
    <property type="match status" value="1"/>
</dbReference>
<dbReference type="PANTHER" id="PTHR43648">
    <property type="entry name" value="ELECTRON TRANSFER FLAVOPROTEIN BETA SUBUNIT LYSINE METHYLTRANSFERASE"/>
    <property type="match status" value="1"/>
</dbReference>
<dbReference type="PANTHER" id="PTHR43648:SF1">
    <property type="entry name" value="ELECTRON TRANSFER FLAVOPROTEIN BETA SUBUNIT LYSINE METHYLTRANSFERASE"/>
    <property type="match status" value="1"/>
</dbReference>
<dbReference type="Pfam" id="PF06325">
    <property type="entry name" value="PrmA"/>
    <property type="match status" value="1"/>
</dbReference>
<dbReference type="PIRSF" id="PIRSF000401">
    <property type="entry name" value="RPL11_MTase"/>
    <property type="match status" value="1"/>
</dbReference>
<dbReference type="SUPFAM" id="SSF53335">
    <property type="entry name" value="S-adenosyl-L-methionine-dependent methyltransferases"/>
    <property type="match status" value="1"/>
</dbReference>
<comment type="function">
    <text evidence="1">Methylates ribosomal protein L11.</text>
</comment>
<comment type="catalytic activity">
    <reaction evidence="1">
        <text>L-lysyl-[protein] + 3 S-adenosyl-L-methionine = N(6),N(6),N(6)-trimethyl-L-lysyl-[protein] + 3 S-adenosyl-L-homocysteine + 3 H(+)</text>
        <dbReference type="Rhea" id="RHEA:54192"/>
        <dbReference type="Rhea" id="RHEA-COMP:9752"/>
        <dbReference type="Rhea" id="RHEA-COMP:13826"/>
        <dbReference type="ChEBI" id="CHEBI:15378"/>
        <dbReference type="ChEBI" id="CHEBI:29969"/>
        <dbReference type="ChEBI" id="CHEBI:57856"/>
        <dbReference type="ChEBI" id="CHEBI:59789"/>
        <dbReference type="ChEBI" id="CHEBI:61961"/>
    </reaction>
</comment>
<comment type="subcellular location">
    <subcellularLocation>
        <location evidence="1">Cytoplasm</location>
    </subcellularLocation>
</comment>
<comment type="similarity">
    <text evidence="1">Belongs to the methyltransferase superfamily. PrmA family.</text>
</comment>
<gene>
    <name evidence="1" type="primary">prmA</name>
    <name type="ordered locus">ABBFA_001280</name>
</gene>
<sequence>MKWLQIHITVDQEQVEFTETLLMSLGAVSVTLDDAEDQALLEPLPGETPLWNKVIVTGIYQQDEQDPIDVDTLEAFLKAQLPDVPMRHEELEDQVWERAWMDYYEPIQIGEKFWIVPEWLEPPEADATNIKLDPGLAFGTGNHASTFLCLQWLGKTDVKDKIVIDYGCGSGILGVAALLLGAKKVYATDIDPQAVLATKQNAELNGVLDRLYVGLPEEFDQEFKPQQADVLVANILAGPLMALAPEFAKLLKSDGDFALAGVIEEQVADVSGVYSEFFDILDVEKREENWCRISGKRKTTN</sequence>
<feature type="chain" id="PRO_1000192564" description="Ribosomal protein L11 methyltransferase">
    <location>
        <begin position="1"/>
        <end position="301"/>
    </location>
</feature>
<feature type="binding site" evidence="1">
    <location>
        <position position="146"/>
    </location>
    <ligand>
        <name>S-adenosyl-L-methionine</name>
        <dbReference type="ChEBI" id="CHEBI:59789"/>
    </ligand>
</feature>
<feature type="binding site" evidence="1">
    <location>
        <position position="167"/>
    </location>
    <ligand>
        <name>S-adenosyl-L-methionine</name>
        <dbReference type="ChEBI" id="CHEBI:59789"/>
    </ligand>
</feature>
<feature type="binding site" evidence="1">
    <location>
        <position position="189"/>
    </location>
    <ligand>
        <name>S-adenosyl-L-methionine</name>
        <dbReference type="ChEBI" id="CHEBI:59789"/>
    </ligand>
</feature>
<feature type="binding site" evidence="1">
    <location>
        <position position="234"/>
    </location>
    <ligand>
        <name>S-adenosyl-L-methionine</name>
        <dbReference type="ChEBI" id="CHEBI:59789"/>
    </ligand>
</feature>
<reference key="1">
    <citation type="journal article" date="2008" name="J. Bacteriol.">
        <title>Comparative genome sequence analysis of multidrug-resistant Acinetobacter baumannii.</title>
        <authorList>
            <person name="Adams M.D."/>
            <person name="Goglin K."/>
            <person name="Molyneaux N."/>
            <person name="Hujer K.M."/>
            <person name="Lavender H."/>
            <person name="Jamison J.J."/>
            <person name="MacDonald I.J."/>
            <person name="Martin K.M."/>
            <person name="Russo T."/>
            <person name="Campagnari A.A."/>
            <person name="Hujer A.M."/>
            <person name="Bonomo R.A."/>
            <person name="Gill S.R."/>
        </authorList>
    </citation>
    <scope>NUCLEOTIDE SEQUENCE [LARGE SCALE GENOMIC DNA]</scope>
    <source>
        <strain>AB307-0294</strain>
    </source>
</reference>
<evidence type="ECO:0000255" key="1">
    <source>
        <dbReference type="HAMAP-Rule" id="MF_00735"/>
    </source>
</evidence>
<name>PRMA_ACIB3</name>